<accession>Q22498</accession>
<feature type="chain" id="PRO_0000193859" description="Probable coatomer subunit gamma">
    <location>
        <begin position="1"/>
        <end position="870"/>
    </location>
</feature>
<feature type="repeat" description="HEAT 1">
    <location>
        <begin position="60"/>
        <end position="97"/>
    </location>
</feature>
<feature type="repeat" description="HEAT 2">
    <location>
        <begin position="99"/>
        <end position="133"/>
    </location>
</feature>
<feature type="repeat" description="HEAT 3">
    <location>
        <begin position="168"/>
        <end position="205"/>
    </location>
</feature>
<feature type="repeat" description="HEAT 4">
    <location>
        <begin position="278"/>
        <end position="315"/>
    </location>
</feature>
<feature type="repeat" description="HEAT 5">
    <location>
        <begin position="316"/>
        <end position="350"/>
    </location>
</feature>
<feature type="repeat" description="HEAT 6">
    <location>
        <begin position="389"/>
        <end position="425"/>
    </location>
</feature>
<comment type="function">
    <text evidence="1">The coatomer is a cytosolic protein complex that binds to dilysine motifs and reversibly associates with Golgi non-clathrin-coated vesicles, which further mediate biosynthetic protein transport from the ER, via the Golgi up to the trans Golgi network. Coatomer complex is required for budding from Golgi membranes, and is essential for the retrograde Golgi-to-ER transport of dilysine-tagged proteins (By similarity).</text>
</comment>
<comment type="subunit">
    <text evidence="1">Oligomeric complex that consists of at least the alpha, beta, beta', gamma, delta, epsilon and zeta subunits.</text>
</comment>
<comment type="subcellular location">
    <subcellularLocation>
        <location evidence="1">Cytoplasm</location>
    </subcellularLocation>
    <subcellularLocation>
        <location evidence="1">Golgi apparatus membrane</location>
        <topology evidence="1">Peripheral membrane protein</topology>
        <orientation evidence="1">Cytoplasmic side</orientation>
    </subcellularLocation>
    <subcellularLocation>
        <location evidence="1">Cytoplasmic vesicle</location>
        <location evidence="1">COPI-coated vesicle membrane</location>
        <topology evidence="1">Peripheral membrane protein</topology>
        <orientation evidence="1">Cytoplasmic side</orientation>
    </subcellularLocation>
    <text evidence="1">The coatomer is cytoplasmic or polymerized on the cytoplasmic side of the Golgi, as well as on the vesicles/buds originating from it.</text>
</comment>
<comment type="similarity">
    <text evidence="2">Belongs to the COPG family.</text>
</comment>
<keyword id="KW-0963">Cytoplasm</keyword>
<keyword id="KW-0968">Cytoplasmic vesicle</keyword>
<keyword id="KW-0931">ER-Golgi transport</keyword>
<keyword id="KW-0333">Golgi apparatus</keyword>
<keyword id="KW-0472">Membrane</keyword>
<keyword id="KW-0653">Protein transport</keyword>
<keyword id="KW-1185">Reference proteome</keyword>
<keyword id="KW-0677">Repeat</keyword>
<keyword id="KW-0813">Transport</keyword>
<protein>
    <recommendedName>
        <fullName>Probable coatomer subunit gamma</fullName>
    </recommendedName>
    <alternativeName>
        <fullName>Gamma-coat protein</fullName>
        <shortName>Gamma-COP</shortName>
    </alternativeName>
</protein>
<proteinExistence type="inferred from homology"/>
<reference key="1">
    <citation type="journal article" date="1998" name="Science">
        <title>Genome sequence of the nematode C. elegans: a platform for investigating biology.</title>
        <authorList>
            <consortium name="The C. elegans sequencing consortium"/>
        </authorList>
    </citation>
    <scope>NUCLEOTIDE SEQUENCE [LARGE SCALE GENOMIC DNA]</scope>
    <source>
        <strain>Bristol N2</strain>
    </source>
</reference>
<dbReference type="EMBL" id="BX284604">
    <property type="protein sequence ID" value="CAA93095.1"/>
    <property type="molecule type" value="Genomic_DNA"/>
</dbReference>
<dbReference type="PIR" id="T24915">
    <property type="entry name" value="T24915"/>
</dbReference>
<dbReference type="RefSeq" id="NP_001040988.1">
    <property type="nucleotide sequence ID" value="NM_001047523.6"/>
</dbReference>
<dbReference type="SMR" id="Q22498"/>
<dbReference type="BioGRID" id="42993">
    <property type="interactions" value="4"/>
</dbReference>
<dbReference type="FunCoup" id="Q22498">
    <property type="interactions" value="3212"/>
</dbReference>
<dbReference type="STRING" id="6239.T14G10.5c.1"/>
<dbReference type="PaxDb" id="6239-T14G10.5c"/>
<dbReference type="PeptideAtlas" id="Q22498"/>
<dbReference type="EnsemblMetazoa" id="T14G10.5a.1">
    <property type="protein sequence ID" value="T14G10.5a.1"/>
    <property type="gene ID" value="WBGene00011775"/>
</dbReference>
<dbReference type="EnsemblMetazoa" id="T14G10.5a.2">
    <property type="protein sequence ID" value="T14G10.5a.2"/>
    <property type="gene ID" value="WBGene00011775"/>
</dbReference>
<dbReference type="GeneID" id="177891"/>
<dbReference type="KEGG" id="cel:CELE_T14G10.5"/>
<dbReference type="UCSC" id="T14G10.5b">
    <property type="organism name" value="c. elegans"/>
</dbReference>
<dbReference type="AGR" id="WB:WBGene00011775"/>
<dbReference type="CTD" id="177891"/>
<dbReference type="WormBase" id="T14G10.5a">
    <property type="protein sequence ID" value="CE06451"/>
    <property type="gene ID" value="WBGene00011775"/>
    <property type="gene designation" value="copg-1"/>
</dbReference>
<dbReference type="eggNOG" id="KOG1078">
    <property type="taxonomic scope" value="Eukaryota"/>
</dbReference>
<dbReference type="HOGENOM" id="CLU_010353_2_0_1"/>
<dbReference type="InParanoid" id="Q22498"/>
<dbReference type="OrthoDB" id="1074925at2759"/>
<dbReference type="Reactome" id="R-CEL-6807878">
    <property type="pathway name" value="COPI-mediated anterograde transport"/>
</dbReference>
<dbReference type="Reactome" id="R-CEL-6811434">
    <property type="pathway name" value="COPI-dependent Golgi-to-ER retrograde traffic"/>
</dbReference>
<dbReference type="PRO" id="PR:Q22498"/>
<dbReference type="Proteomes" id="UP000001940">
    <property type="component" value="Chromosome IV"/>
</dbReference>
<dbReference type="Bgee" id="WBGene00011775">
    <property type="expression patterns" value="Expressed in pharyngeal muscle cell (C elegans) and 4 other cell types or tissues"/>
</dbReference>
<dbReference type="ExpressionAtlas" id="Q22498">
    <property type="expression patterns" value="baseline and differential"/>
</dbReference>
<dbReference type="GO" id="GO:0030126">
    <property type="term" value="C:COPI vesicle coat"/>
    <property type="evidence" value="ECO:0000318"/>
    <property type="project" value="GO_Central"/>
</dbReference>
<dbReference type="GO" id="GO:0005783">
    <property type="term" value="C:endoplasmic reticulum"/>
    <property type="evidence" value="ECO:0000318"/>
    <property type="project" value="GO_Central"/>
</dbReference>
<dbReference type="GO" id="GO:0005793">
    <property type="term" value="C:endoplasmic reticulum-Golgi intermediate compartment"/>
    <property type="evidence" value="ECO:0000318"/>
    <property type="project" value="GO_Central"/>
</dbReference>
<dbReference type="GO" id="GO:0000139">
    <property type="term" value="C:Golgi membrane"/>
    <property type="evidence" value="ECO:0000318"/>
    <property type="project" value="GO_Central"/>
</dbReference>
<dbReference type="GO" id="GO:0005198">
    <property type="term" value="F:structural molecule activity"/>
    <property type="evidence" value="ECO:0007669"/>
    <property type="project" value="InterPro"/>
</dbReference>
<dbReference type="GO" id="GO:0006888">
    <property type="term" value="P:endoplasmic reticulum to Golgi vesicle-mediated transport"/>
    <property type="evidence" value="ECO:0000318"/>
    <property type="project" value="GO_Central"/>
</dbReference>
<dbReference type="GO" id="GO:0006891">
    <property type="term" value="P:intra-Golgi vesicle-mediated transport"/>
    <property type="evidence" value="ECO:0000318"/>
    <property type="project" value="GO_Central"/>
</dbReference>
<dbReference type="GO" id="GO:0006886">
    <property type="term" value="P:intracellular protein transport"/>
    <property type="evidence" value="ECO:0007669"/>
    <property type="project" value="InterPro"/>
</dbReference>
<dbReference type="GO" id="GO:0072384">
    <property type="term" value="P:organelle transport along microtubule"/>
    <property type="evidence" value="ECO:0000318"/>
    <property type="project" value="GO_Central"/>
</dbReference>
<dbReference type="GO" id="GO:0009306">
    <property type="term" value="P:protein secretion"/>
    <property type="evidence" value="ECO:0000318"/>
    <property type="project" value="GO_Central"/>
</dbReference>
<dbReference type="FunFam" id="1.25.10.10:FF:000038">
    <property type="entry name" value="Coatomer subunit gamma"/>
    <property type="match status" value="1"/>
</dbReference>
<dbReference type="FunFam" id="1.25.10.10:FF:000071">
    <property type="entry name" value="Coatomer subunit gamma"/>
    <property type="match status" value="1"/>
</dbReference>
<dbReference type="FunFam" id="2.60.40.1480:FF:000001">
    <property type="entry name" value="Coatomer subunit gamma"/>
    <property type="match status" value="1"/>
</dbReference>
<dbReference type="FunFam" id="3.30.310.10:FF:000011">
    <property type="entry name" value="Coatomer subunit gamma"/>
    <property type="match status" value="1"/>
</dbReference>
<dbReference type="Gene3D" id="2.60.40.1480">
    <property type="entry name" value="Coatomer, gamma subunit, appendage domain"/>
    <property type="match status" value="1"/>
</dbReference>
<dbReference type="Gene3D" id="1.25.10.10">
    <property type="entry name" value="Leucine-rich Repeat Variant"/>
    <property type="match status" value="2"/>
</dbReference>
<dbReference type="Gene3D" id="3.30.310.10">
    <property type="entry name" value="TATA-Binding Protein"/>
    <property type="match status" value="1"/>
</dbReference>
<dbReference type="InterPro" id="IPR011989">
    <property type="entry name" value="ARM-like"/>
</dbReference>
<dbReference type="InterPro" id="IPR016024">
    <property type="entry name" value="ARM-type_fold"/>
</dbReference>
<dbReference type="InterPro" id="IPR002553">
    <property type="entry name" value="Clathrin/coatomer_adapt-like_N"/>
</dbReference>
<dbReference type="InterPro" id="IPR013041">
    <property type="entry name" value="Clathrin_app_Ig-like_sf"/>
</dbReference>
<dbReference type="InterPro" id="IPR009028">
    <property type="entry name" value="Coatomer/calthrin_app_sub_C"/>
</dbReference>
<dbReference type="InterPro" id="IPR032154">
    <property type="entry name" value="Coatomer_g_Cpla"/>
</dbReference>
<dbReference type="InterPro" id="IPR017106">
    <property type="entry name" value="Coatomer_gsu"/>
</dbReference>
<dbReference type="InterPro" id="IPR013040">
    <property type="entry name" value="Coatomer_gsu_app_Ig-like_dom"/>
</dbReference>
<dbReference type="InterPro" id="IPR037067">
    <property type="entry name" value="Coatomer_gsu_app_sf"/>
</dbReference>
<dbReference type="InterPro" id="IPR012295">
    <property type="entry name" value="TBP_dom_sf"/>
</dbReference>
<dbReference type="PANTHER" id="PTHR10261">
    <property type="entry name" value="COATOMER SUBUNIT GAMMA"/>
    <property type="match status" value="1"/>
</dbReference>
<dbReference type="PANTHER" id="PTHR10261:SF0">
    <property type="entry name" value="COATOMER SUBUNIT GAMMA-2"/>
    <property type="match status" value="1"/>
</dbReference>
<dbReference type="Pfam" id="PF01602">
    <property type="entry name" value="Adaptin_N"/>
    <property type="match status" value="1"/>
</dbReference>
<dbReference type="Pfam" id="PF16381">
    <property type="entry name" value="Coatomer_g_Cpla"/>
    <property type="match status" value="1"/>
</dbReference>
<dbReference type="Pfam" id="PF08752">
    <property type="entry name" value="COP-gamma_platf"/>
    <property type="match status" value="1"/>
</dbReference>
<dbReference type="PIRSF" id="PIRSF037093">
    <property type="entry name" value="Coatomer_gamma_subunit"/>
    <property type="match status" value="1"/>
</dbReference>
<dbReference type="SUPFAM" id="SSF48371">
    <property type="entry name" value="ARM repeat"/>
    <property type="match status" value="1"/>
</dbReference>
<dbReference type="SUPFAM" id="SSF49348">
    <property type="entry name" value="Clathrin adaptor appendage domain"/>
    <property type="match status" value="1"/>
</dbReference>
<dbReference type="SUPFAM" id="SSF55711">
    <property type="entry name" value="Subdomain of clathrin and coatomer appendage domain"/>
    <property type="match status" value="1"/>
</dbReference>
<name>COPG_CAEEL</name>
<organism>
    <name type="scientific">Caenorhabditis elegans</name>
    <dbReference type="NCBI Taxonomy" id="6239"/>
    <lineage>
        <taxon>Eukaryota</taxon>
        <taxon>Metazoa</taxon>
        <taxon>Ecdysozoa</taxon>
        <taxon>Nematoda</taxon>
        <taxon>Chromadorea</taxon>
        <taxon>Rhabditida</taxon>
        <taxon>Rhabditina</taxon>
        <taxon>Rhabditomorpha</taxon>
        <taxon>Rhabditoidea</taxon>
        <taxon>Rhabditidae</taxon>
        <taxon>Peloderinae</taxon>
        <taxon>Caenorhabditis</taxon>
    </lineage>
</organism>
<sequence length="870" mass="96302">MKTNKKDEETGGNVYAHLDKTSVLQEARAFNETPINARKCCFILSKLIYIIQQGESIGRTEATEAFFGVTKLWQSKDVSLRRMVYLAVKELAEVSDDVIIVTSSLTKDMTGREDLYRAAAIRALCKITDTGMLQTIERYMKQAIVDRNSAISSSAIVSSIHLMRKSSEVVRRWANEVQEAVSSDNHMVQYHALALLYQIRANDRLAVNKLVQKFSKNALRSPYAVCYLIRIATRCLVDDDQPDSSVFTFIESCLRHKSEMVVYEAARAIVSLPQTTPSEIQPAITALQMCCTSPKAAVRFAAVRTLNKVAMAHPNAVMSCNVDLEKFITDPNRSIATLAITTLLKTGAESSVERLMQQIAGFVNEISDEFKIVVVDAIRSLCSRYPRKHTVMMPFLAKMLRSDGSYDYKKAIVETIIAIIEENPDAKVAGLAHLCEFIEDCEHDNLSTRVLHLLGREAPKTPNPSSYIRFIYNRVILESTKVRAAAVTALAKFGAQCVDLRPSIQVLLKRCLLDSDDEVRDRATFYLKMLTEAAEGLIHNFILDGLQVSPSGLERSILDYLRSGSYSSPFDLRVVPVTQQALSQPEKRVPQLVEEEEKPKAPKVEPYAAQLAAIPQFAALGPVFKSSTRIALTESIAEYTVHMIKHTFANAMVLQFECKNTMNDQLLLDVSVELEDPDGEWETGNTVQIDKLPYGEVHSAFSLLEFPDSGAISGSLGAILKFKVMDVDPTSGEPDSDDTYEQTYVLEEVDVNVSDSVQGVAKSSFGSAWEALGDDATREETFQLSTVENIPDAVKKISEILGLVPCERSDRVPEGKTQHTVFLSGVFRGGYDVLSKATVAVDPNDNSIAMNIIIKSNEPLVADLVISAVV</sequence>
<gene>
    <name evidence="3" type="primary">copg-1</name>
    <name evidence="3" type="ORF">T14G10.5</name>
</gene>
<evidence type="ECO:0000250" key="1"/>
<evidence type="ECO:0000305" key="2"/>
<evidence type="ECO:0000312" key="3">
    <source>
        <dbReference type="WormBase" id="T14G10.5a"/>
    </source>
</evidence>